<proteinExistence type="inferred from homology"/>
<organism>
    <name type="scientific">Gluconobacter oxydans (strain 621H)</name>
    <name type="common">Gluconobacter suboxydans</name>
    <dbReference type="NCBI Taxonomy" id="290633"/>
    <lineage>
        <taxon>Bacteria</taxon>
        <taxon>Pseudomonadati</taxon>
        <taxon>Pseudomonadota</taxon>
        <taxon>Alphaproteobacteria</taxon>
        <taxon>Acetobacterales</taxon>
        <taxon>Acetobacteraceae</taxon>
        <taxon>Gluconobacter</taxon>
    </lineage>
</organism>
<keyword id="KW-1185">Reference proteome</keyword>
<keyword id="KW-0687">Ribonucleoprotein</keyword>
<keyword id="KW-0689">Ribosomal protein</keyword>
<dbReference type="EMBL" id="CP000009">
    <property type="protein sequence ID" value="AAW60155.1"/>
    <property type="molecule type" value="Genomic_DNA"/>
</dbReference>
<dbReference type="RefSeq" id="WP_011251958.1">
    <property type="nucleotide sequence ID" value="NZ_LT900338.1"/>
</dbReference>
<dbReference type="SMR" id="Q5FTZ1"/>
<dbReference type="STRING" id="290633.GOX0372"/>
<dbReference type="GeneID" id="56904638"/>
<dbReference type="KEGG" id="gox:GOX0372"/>
<dbReference type="eggNOG" id="COG0255">
    <property type="taxonomic scope" value="Bacteria"/>
</dbReference>
<dbReference type="HOGENOM" id="CLU_158491_1_0_5"/>
<dbReference type="Proteomes" id="UP000006375">
    <property type="component" value="Chromosome"/>
</dbReference>
<dbReference type="GO" id="GO:0022625">
    <property type="term" value="C:cytosolic large ribosomal subunit"/>
    <property type="evidence" value="ECO:0007669"/>
    <property type="project" value="TreeGrafter"/>
</dbReference>
<dbReference type="GO" id="GO:0003735">
    <property type="term" value="F:structural constituent of ribosome"/>
    <property type="evidence" value="ECO:0007669"/>
    <property type="project" value="InterPro"/>
</dbReference>
<dbReference type="GO" id="GO:0006412">
    <property type="term" value="P:translation"/>
    <property type="evidence" value="ECO:0007669"/>
    <property type="project" value="UniProtKB-UniRule"/>
</dbReference>
<dbReference type="CDD" id="cd00427">
    <property type="entry name" value="Ribosomal_L29_HIP"/>
    <property type="match status" value="1"/>
</dbReference>
<dbReference type="FunFam" id="1.10.287.310:FF:000001">
    <property type="entry name" value="50S ribosomal protein L29"/>
    <property type="match status" value="1"/>
</dbReference>
<dbReference type="Gene3D" id="1.10.287.310">
    <property type="match status" value="1"/>
</dbReference>
<dbReference type="HAMAP" id="MF_00374">
    <property type="entry name" value="Ribosomal_uL29"/>
    <property type="match status" value="1"/>
</dbReference>
<dbReference type="InterPro" id="IPR050063">
    <property type="entry name" value="Ribosomal_protein_uL29"/>
</dbReference>
<dbReference type="InterPro" id="IPR001854">
    <property type="entry name" value="Ribosomal_uL29"/>
</dbReference>
<dbReference type="InterPro" id="IPR018254">
    <property type="entry name" value="Ribosomal_uL29_CS"/>
</dbReference>
<dbReference type="InterPro" id="IPR036049">
    <property type="entry name" value="Ribosomal_uL29_sf"/>
</dbReference>
<dbReference type="NCBIfam" id="TIGR00012">
    <property type="entry name" value="L29"/>
    <property type="match status" value="1"/>
</dbReference>
<dbReference type="PANTHER" id="PTHR10916">
    <property type="entry name" value="60S RIBOSOMAL PROTEIN L35/50S RIBOSOMAL PROTEIN L29"/>
    <property type="match status" value="1"/>
</dbReference>
<dbReference type="PANTHER" id="PTHR10916:SF0">
    <property type="entry name" value="LARGE RIBOSOMAL SUBUNIT PROTEIN UL29C"/>
    <property type="match status" value="1"/>
</dbReference>
<dbReference type="Pfam" id="PF00831">
    <property type="entry name" value="Ribosomal_L29"/>
    <property type="match status" value="1"/>
</dbReference>
<dbReference type="SUPFAM" id="SSF46561">
    <property type="entry name" value="Ribosomal protein L29 (L29p)"/>
    <property type="match status" value="1"/>
</dbReference>
<dbReference type="PROSITE" id="PS00579">
    <property type="entry name" value="RIBOSOMAL_L29"/>
    <property type="match status" value="1"/>
</dbReference>
<name>RL29_GLUOX</name>
<comment type="similarity">
    <text evidence="1">Belongs to the universal ribosomal protein uL29 family.</text>
</comment>
<evidence type="ECO:0000255" key="1">
    <source>
        <dbReference type="HAMAP-Rule" id="MF_00374"/>
    </source>
</evidence>
<evidence type="ECO:0000305" key="2"/>
<gene>
    <name evidence="1" type="primary">rpmC</name>
    <name type="ordered locus">GOX0372</name>
</gene>
<feature type="chain" id="PRO_0000130396" description="Large ribosomal subunit protein uL29">
    <location>
        <begin position="1"/>
        <end position="77"/>
    </location>
</feature>
<accession>Q5FTZ1</accession>
<protein>
    <recommendedName>
        <fullName evidence="1">Large ribosomal subunit protein uL29</fullName>
    </recommendedName>
    <alternativeName>
        <fullName evidence="2">50S ribosomal protein L29</fullName>
    </alternativeName>
</protein>
<reference key="1">
    <citation type="journal article" date="2005" name="Nat. Biotechnol.">
        <title>Complete genome sequence of the acetic acid bacterium Gluconobacter oxydans.</title>
        <authorList>
            <person name="Prust C."/>
            <person name="Hoffmeister M."/>
            <person name="Liesegang H."/>
            <person name="Wiezer A."/>
            <person name="Fricke W.F."/>
            <person name="Ehrenreich A."/>
            <person name="Gottschalk G."/>
            <person name="Deppenmeier U."/>
        </authorList>
    </citation>
    <scope>NUCLEOTIDE SEQUENCE [LARGE SCALE GENOMIC DNA]</scope>
    <source>
        <strain>621H</strain>
    </source>
</reference>
<sequence length="77" mass="8492">MADTYKPADLRAKSEDELNALLLDLKREQINHRFSAATGQSENTSRVKVVRRAVARIKTLAHQSKNRAGAKTSAAKS</sequence>